<name>SYD_THET2</name>
<evidence type="ECO:0000255" key="1">
    <source>
        <dbReference type="HAMAP-Rule" id="MF_00044"/>
    </source>
</evidence>
<proteinExistence type="inferred from homology"/>
<sequence length="580" mass="66030">MRRTHYAGSLRETHVGEEVVLEGWVNRRRDLGGLIFLDLRDREGLVQLVAHPASPAYATAERVRPEWVVRAKGLVRLRPEPNPRLATGRVEVELSALEVLAEAKTPPFPVDAGWRGEEEKEASEELRLKYRYLDLRRRRMQENLRLRHRVIKAIWDFLDREGFVQVETPFLTKSTPEGARDFLVPYRHEPGLFYALPQSPQLFKQMLMVAGLDRYFQIARCFRDEDLRADRQPDFTQLDLEMSFVEVEDVLELNERLMAHVFREALGVELPLPFPRLSYEEAMERYGSDKPDLRFGLELKEVGPLFRQSGFRVFQEAESVKALALPKALSRKEVAELEEVAKRHKAQGLAWARVEEGGFSGGVAKFLEPVREALLQATEARPGDTLLFVAGPRKVAATALGAVRLRAADLLGLKREGFRFLWVVDFPLLEWDEEEEAWTYMHHPFTSPHPEDLPLLEKDPGRVRALAYDLVLNGVEVGGGSIRIHDPRLQARVFRLLGIGEEEQREKFGFFLEALEYGAPPHGGIAWGLDRLLALMTGSPSIREVIAFPKNKEGKDPLTGAPSPVPEEQLRELGLMVVRP</sequence>
<protein>
    <recommendedName>
        <fullName evidence="1">Aspartate--tRNA ligase</fullName>
        <ecNumber evidence="1">6.1.1.12</ecNumber>
    </recommendedName>
    <alternativeName>
        <fullName evidence="1">Aspartyl-tRNA synthetase</fullName>
        <shortName evidence="1">AspRS</shortName>
    </alternativeName>
</protein>
<feature type="chain" id="PRO_0000110969" description="Aspartate--tRNA ligase">
    <location>
        <begin position="1"/>
        <end position="580"/>
    </location>
</feature>
<feature type="region of interest" description="Aspartate" evidence="1">
    <location>
        <begin position="201"/>
        <end position="204"/>
    </location>
</feature>
<feature type="binding site" evidence="1">
    <location>
        <position position="177"/>
    </location>
    <ligand>
        <name>L-aspartate</name>
        <dbReference type="ChEBI" id="CHEBI:29991"/>
    </ligand>
</feature>
<feature type="binding site" evidence="1">
    <location>
        <begin position="223"/>
        <end position="225"/>
    </location>
    <ligand>
        <name>ATP</name>
        <dbReference type="ChEBI" id="CHEBI:30616"/>
    </ligand>
</feature>
<feature type="binding site" evidence="1">
    <location>
        <position position="223"/>
    </location>
    <ligand>
        <name>L-aspartate</name>
        <dbReference type="ChEBI" id="CHEBI:29991"/>
    </ligand>
</feature>
<feature type="binding site" evidence="1">
    <location>
        <position position="232"/>
    </location>
    <ligand>
        <name>ATP</name>
        <dbReference type="ChEBI" id="CHEBI:30616"/>
    </ligand>
</feature>
<feature type="binding site" evidence="1">
    <location>
        <position position="442"/>
    </location>
    <ligand>
        <name>L-aspartate</name>
        <dbReference type="ChEBI" id="CHEBI:29991"/>
    </ligand>
</feature>
<feature type="binding site" evidence="1">
    <location>
        <position position="476"/>
    </location>
    <ligand>
        <name>ATP</name>
        <dbReference type="ChEBI" id="CHEBI:30616"/>
    </ligand>
</feature>
<feature type="binding site" evidence="1">
    <location>
        <position position="483"/>
    </location>
    <ligand>
        <name>L-aspartate</name>
        <dbReference type="ChEBI" id="CHEBI:29991"/>
    </ligand>
</feature>
<feature type="binding site" evidence="1">
    <location>
        <begin position="528"/>
        <end position="531"/>
    </location>
    <ligand>
        <name>ATP</name>
        <dbReference type="ChEBI" id="CHEBI:30616"/>
    </ligand>
</feature>
<organism>
    <name type="scientific">Thermus thermophilus (strain ATCC BAA-163 / DSM 7039 / HB27)</name>
    <dbReference type="NCBI Taxonomy" id="262724"/>
    <lineage>
        <taxon>Bacteria</taxon>
        <taxon>Thermotogati</taxon>
        <taxon>Deinococcota</taxon>
        <taxon>Deinococci</taxon>
        <taxon>Thermales</taxon>
        <taxon>Thermaceae</taxon>
        <taxon>Thermus</taxon>
    </lineage>
</organism>
<gene>
    <name evidence="1" type="primary">aspS</name>
    <name type="ordered locus">TT_C0359</name>
</gene>
<dbReference type="EC" id="6.1.1.12" evidence="1"/>
<dbReference type="EMBL" id="AE017221">
    <property type="protein sequence ID" value="AAS80707.1"/>
    <property type="molecule type" value="Genomic_DNA"/>
</dbReference>
<dbReference type="RefSeq" id="WP_011172809.1">
    <property type="nucleotide sequence ID" value="NC_005835.1"/>
</dbReference>
<dbReference type="SMR" id="Q72KH6"/>
<dbReference type="GeneID" id="3169335"/>
<dbReference type="KEGG" id="tth:TT_C0359"/>
<dbReference type="eggNOG" id="COG0173">
    <property type="taxonomic scope" value="Bacteria"/>
</dbReference>
<dbReference type="HOGENOM" id="CLU_014330_3_2_0"/>
<dbReference type="OrthoDB" id="9802326at2"/>
<dbReference type="Proteomes" id="UP000000592">
    <property type="component" value="Chromosome"/>
</dbReference>
<dbReference type="GO" id="GO:0005737">
    <property type="term" value="C:cytoplasm"/>
    <property type="evidence" value="ECO:0007669"/>
    <property type="project" value="UniProtKB-SubCell"/>
</dbReference>
<dbReference type="GO" id="GO:0004815">
    <property type="term" value="F:aspartate-tRNA ligase activity"/>
    <property type="evidence" value="ECO:0007669"/>
    <property type="project" value="UniProtKB-UniRule"/>
</dbReference>
<dbReference type="GO" id="GO:0005524">
    <property type="term" value="F:ATP binding"/>
    <property type="evidence" value="ECO:0007669"/>
    <property type="project" value="UniProtKB-UniRule"/>
</dbReference>
<dbReference type="GO" id="GO:0003676">
    <property type="term" value="F:nucleic acid binding"/>
    <property type="evidence" value="ECO:0007669"/>
    <property type="project" value="InterPro"/>
</dbReference>
<dbReference type="GO" id="GO:0006422">
    <property type="term" value="P:aspartyl-tRNA aminoacylation"/>
    <property type="evidence" value="ECO:0007669"/>
    <property type="project" value="UniProtKB-UniRule"/>
</dbReference>
<dbReference type="CDD" id="cd00777">
    <property type="entry name" value="AspRS_core"/>
    <property type="match status" value="1"/>
</dbReference>
<dbReference type="CDD" id="cd04317">
    <property type="entry name" value="EcAspRS_like_N"/>
    <property type="match status" value="1"/>
</dbReference>
<dbReference type="Gene3D" id="3.30.930.10">
    <property type="entry name" value="Bira Bifunctional Protein, Domain 2"/>
    <property type="match status" value="1"/>
</dbReference>
<dbReference type="Gene3D" id="3.30.1360.30">
    <property type="entry name" value="GAD-like domain"/>
    <property type="match status" value="1"/>
</dbReference>
<dbReference type="Gene3D" id="2.40.50.140">
    <property type="entry name" value="Nucleic acid-binding proteins"/>
    <property type="match status" value="1"/>
</dbReference>
<dbReference type="HAMAP" id="MF_00044">
    <property type="entry name" value="Asp_tRNA_synth_type1"/>
    <property type="match status" value="1"/>
</dbReference>
<dbReference type="InterPro" id="IPR004364">
    <property type="entry name" value="Aa-tRNA-synt_II"/>
</dbReference>
<dbReference type="InterPro" id="IPR006195">
    <property type="entry name" value="aa-tRNA-synth_II"/>
</dbReference>
<dbReference type="InterPro" id="IPR045864">
    <property type="entry name" value="aa-tRNA-synth_II/BPL/LPL"/>
</dbReference>
<dbReference type="InterPro" id="IPR004524">
    <property type="entry name" value="Asp-tRNA-ligase_1"/>
</dbReference>
<dbReference type="InterPro" id="IPR047089">
    <property type="entry name" value="Asp-tRNA-ligase_1_N"/>
</dbReference>
<dbReference type="InterPro" id="IPR002312">
    <property type="entry name" value="Asp/Asn-tRNA-synth_IIb"/>
</dbReference>
<dbReference type="InterPro" id="IPR047090">
    <property type="entry name" value="AspRS_core"/>
</dbReference>
<dbReference type="InterPro" id="IPR004115">
    <property type="entry name" value="GAD-like_sf"/>
</dbReference>
<dbReference type="InterPro" id="IPR029351">
    <property type="entry name" value="GAD_dom"/>
</dbReference>
<dbReference type="InterPro" id="IPR012340">
    <property type="entry name" value="NA-bd_OB-fold"/>
</dbReference>
<dbReference type="InterPro" id="IPR004365">
    <property type="entry name" value="NA-bd_OB_tRNA"/>
</dbReference>
<dbReference type="NCBIfam" id="TIGR00459">
    <property type="entry name" value="aspS_bact"/>
    <property type="match status" value="1"/>
</dbReference>
<dbReference type="NCBIfam" id="NF001750">
    <property type="entry name" value="PRK00476.1"/>
    <property type="match status" value="1"/>
</dbReference>
<dbReference type="PANTHER" id="PTHR22594:SF5">
    <property type="entry name" value="ASPARTATE--TRNA LIGASE, MITOCHONDRIAL"/>
    <property type="match status" value="1"/>
</dbReference>
<dbReference type="PANTHER" id="PTHR22594">
    <property type="entry name" value="ASPARTYL/LYSYL-TRNA SYNTHETASE"/>
    <property type="match status" value="1"/>
</dbReference>
<dbReference type="Pfam" id="PF02938">
    <property type="entry name" value="GAD"/>
    <property type="match status" value="1"/>
</dbReference>
<dbReference type="Pfam" id="PF00152">
    <property type="entry name" value="tRNA-synt_2"/>
    <property type="match status" value="1"/>
</dbReference>
<dbReference type="Pfam" id="PF01336">
    <property type="entry name" value="tRNA_anti-codon"/>
    <property type="match status" value="1"/>
</dbReference>
<dbReference type="PRINTS" id="PR01042">
    <property type="entry name" value="TRNASYNTHASP"/>
</dbReference>
<dbReference type="SUPFAM" id="SSF55681">
    <property type="entry name" value="Class II aaRS and biotin synthetases"/>
    <property type="match status" value="1"/>
</dbReference>
<dbReference type="SUPFAM" id="SSF55261">
    <property type="entry name" value="GAD domain-like"/>
    <property type="match status" value="1"/>
</dbReference>
<dbReference type="SUPFAM" id="SSF50249">
    <property type="entry name" value="Nucleic acid-binding proteins"/>
    <property type="match status" value="1"/>
</dbReference>
<dbReference type="PROSITE" id="PS50862">
    <property type="entry name" value="AA_TRNA_LIGASE_II"/>
    <property type="match status" value="1"/>
</dbReference>
<reference key="1">
    <citation type="journal article" date="2004" name="Nat. Biotechnol.">
        <title>The genome sequence of the extreme thermophile Thermus thermophilus.</title>
        <authorList>
            <person name="Henne A."/>
            <person name="Brueggemann H."/>
            <person name="Raasch C."/>
            <person name="Wiezer A."/>
            <person name="Hartsch T."/>
            <person name="Liesegang H."/>
            <person name="Johann A."/>
            <person name="Lienard T."/>
            <person name="Gohl O."/>
            <person name="Martinez-Arias R."/>
            <person name="Jacobi C."/>
            <person name="Starkuviene V."/>
            <person name="Schlenczeck S."/>
            <person name="Dencker S."/>
            <person name="Huber R."/>
            <person name="Klenk H.-P."/>
            <person name="Kramer W."/>
            <person name="Merkl R."/>
            <person name="Gottschalk G."/>
            <person name="Fritz H.-J."/>
        </authorList>
    </citation>
    <scope>NUCLEOTIDE SEQUENCE [LARGE SCALE GENOMIC DNA]</scope>
    <source>
        <strain>ATCC BAA-163 / DSM 7039 / HB27</strain>
    </source>
</reference>
<accession>Q72KH6</accession>
<keyword id="KW-0030">Aminoacyl-tRNA synthetase</keyword>
<keyword id="KW-0067">ATP-binding</keyword>
<keyword id="KW-0963">Cytoplasm</keyword>
<keyword id="KW-0436">Ligase</keyword>
<keyword id="KW-0547">Nucleotide-binding</keyword>
<keyword id="KW-0648">Protein biosynthesis</keyword>
<comment type="function">
    <text evidence="1">Catalyzes the attachment of L-aspartate to tRNA(Asp) in a two-step reaction: L-aspartate is first activated by ATP to form Asp-AMP and then transferred to the acceptor end of tRNA(Asp).</text>
</comment>
<comment type="catalytic activity">
    <reaction evidence="1">
        <text>tRNA(Asp) + L-aspartate + ATP = L-aspartyl-tRNA(Asp) + AMP + diphosphate</text>
        <dbReference type="Rhea" id="RHEA:19649"/>
        <dbReference type="Rhea" id="RHEA-COMP:9660"/>
        <dbReference type="Rhea" id="RHEA-COMP:9678"/>
        <dbReference type="ChEBI" id="CHEBI:29991"/>
        <dbReference type="ChEBI" id="CHEBI:30616"/>
        <dbReference type="ChEBI" id="CHEBI:33019"/>
        <dbReference type="ChEBI" id="CHEBI:78442"/>
        <dbReference type="ChEBI" id="CHEBI:78516"/>
        <dbReference type="ChEBI" id="CHEBI:456215"/>
        <dbReference type="EC" id="6.1.1.12"/>
    </reaction>
</comment>
<comment type="subunit">
    <text evidence="1">Homodimer.</text>
</comment>
<comment type="subcellular location">
    <subcellularLocation>
        <location evidence="1">Cytoplasm</location>
    </subcellularLocation>
</comment>
<comment type="similarity">
    <text evidence="1">Belongs to the class-II aminoacyl-tRNA synthetase family. Type 1 subfamily.</text>
</comment>